<organism>
    <name type="scientific">Staphylococcus epidermidis (strain ATCC 35984 / DSM 28319 / BCRC 17069 / CCUG 31568 / BM 3577 / RP62A)</name>
    <dbReference type="NCBI Taxonomy" id="176279"/>
    <lineage>
        <taxon>Bacteria</taxon>
        <taxon>Bacillati</taxon>
        <taxon>Bacillota</taxon>
        <taxon>Bacilli</taxon>
        <taxon>Bacillales</taxon>
        <taxon>Staphylococcaceae</taxon>
        <taxon>Staphylococcus</taxon>
    </lineage>
</organism>
<protein>
    <recommendedName>
        <fullName evidence="1">Small ribosomal subunit protein uS10</fullName>
    </recommendedName>
    <alternativeName>
        <fullName evidence="2">30S ribosomal protein S10</fullName>
    </alternativeName>
</protein>
<comment type="function">
    <text evidence="1">Involved in the binding of tRNA to the ribosomes.</text>
</comment>
<comment type="subunit">
    <text evidence="1">Part of the 30S ribosomal subunit.</text>
</comment>
<comment type="similarity">
    <text evidence="1">Belongs to the universal ribosomal protein uS10 family.</text>
</comment>
<evidence type="ECO:0000255" key="1">
    <source>
        <dbReference type="HAMAP-Rule" id="MF_00508"/>
    </source>
</evidence>
<evidence type="ECO:0000305" key="2"/>
<reference key="1">
    <citation type="journal article" date="2005" name="J. Bacteriol.">
        <title>Insights on evolution of virulence and resistance from the complete genome analysis of an early methicillin-resistant Staphylococcus aureus strain and a biofilm-producing methicillin-resistant Staphylococcus epidermidis strain.</title>
        <authorList>
            <person name="Gill S.R."/>
            <person name="Fouts D.E."/>
            <person name="Archer G.L."/>
            <person name="Mongodin E.F."/>
            <person name="DeBoy R.T."/>
            <person name="Ravel J."/>
            <person name="Paulsen I.T."/>
            <person name="Kolonay J.F."/>
            <person name="Brinkac L.M."/>
            <person name="Beanan M.J."/>
            <person name="Dodson R.J."/>
            <person name="Daugherty S.C."/>
            <person name="Madupu R."/>
            <person name="Angiuoli S.V."/>
            <person name="Durkin A.S."/>
            <person name="Haft D.H."/>
            <person name="Vamathevan J.J."/>
            <person name="Khouri H."/>
            <person name="Utterback T.R."/>
            <person name="Lee C."/>
            <person name="Dimitrov G."/>
            <person name="Jiang L."/>
            <person name="Qin H."/>
            <person name="Weidman J."/>
            <person name="Tran K."/>
            <person name="Kang K.H."/>
            <person name="Hance I.R."/>
            <person name="Nelson K.E."/>
            <person name="Fraser C.M."/>
        </authorList>
    </citation>
    <scope>NUCLEOTIDE SEQUENCE [LARGE SCALE GENOMIC DNA]</scope>
    <source>
        <strain>ATCC 35984 / DSM 28319 / BCRC 17069 / CCUG 31568 / BM 3577 / RP62A</strain>
    </source>
</reference>
<accession>Q5HLZ8</accession>
<sequence>MAKQKIRIRLKAYDHRVIDQSAEKIVETAKRSGADVSGPIPLPTEKSVYTIIRAVHKYKDSREQFEQRTHKRLIDIVNPTPKTVDALMGLNLPSGVDIEIKL</sequence>
<proteinExistence type="inferred from homology"/>
<name>RS10_STAEQ</name>
<gene>
    <name evidence="1" type="primary">rpsJ</name>
    <name type="ordered locus">SERP1832</name>
</gene>
<keyword id="KW-1185">Reference proteome</keyword>
<keyword id="KW-0687">Ribonucleoprotein</keyword>
<keyword id="KW-0689">Ribosomal protein</keyword>
<feature type="chain" id="PRO_0000146601" description="Small ribosomal subunit protein uS10">
    <location>
        <begin position="1"/>
        <end position="102"/>
    </location>
</feature>
<dbReference type="EMBL" id="CP000029">
    <property type="protein sequence ID" value="AAW55170.1"/>
    <property type="molecule type" value="Genomic_DNA"/>
</dbReference>
<dbReference type="RefSeq" id="WP_001118667.1">
    <property type="nucleotide sequence ID" value="NC_002976.3"/>
</dbReference>
<dbReference type="SMR" id="Q5HLZ8"/>
<dbReference type="STRING" id="176279.SERP1832"/>
<dbReference type="GeneID" id="98346563"/>
<dbReference type="KEGG" id="ser:SERP1832"/>
<dbReference type="eggNOG" id="COG0051">
    <property type="taxonomic scope" value="Bacteria"/>
</dbReference>
<dbReference type="HOGENOM" id="CLU_122625_1_3_9"/>
<dbReference type="Proteomes" id="UP000000531">
    <property type="component" value="Chromosome"/>
</dbReference>
<dbReference type="GO" id="GO:1990904">
    <property type="term" value="C:ribonucleoprotein complex"/>
    <property type="evidence" value="ECO:0007669"/>
    <property type="project" value="UniProtKB-KW"/>
</dbReference>
<dbReference type="GO" id="GO:0005840">
    <property type="term" value="C:ribosome"/>
    <property type="evidence" value="ECO:0007669"/>
    <property type="project" value="UniProtKB-KW"/>
</dbReference>
<dbReference type="GO" id="GO:0003735">
    <property type="term" value="F:structural constituent of ribosome"/>
    <property type="evidence" value="ECO:0007669"/>
    <property type="project" value="InterPro"/>
</dbReference>
<dbReference type="GO" id="GO:0000049">
    <property type="term" value="F:tRNA binding"/>
    <property type="evidence" value="ECO:0007669"/>
    <property type="project" value="UniProtKB-UniRule"/>
</dbReference>
<dbReference type="GO" id="GO:0006412">
    <property type="term" value="P:translation"/>
    <property type="evidence" value="ECO:0007669"/>
    <property type="project" value="UniProtKB-UniRule"/>
</dbReference>
<dbReference type="FunFam" id="3.30.70.600:FF:000001">
    <property type="entry name" value="30S ribosomal protein S10"/>
    <property type="match status" value="1"/>
</dbReference>
<dbReference type="Gene3D" id="3.30.70.600">
    <property type="entry name" value="Ribosomal protein S10 domain"/>
    <property type="match status" value="1"/>
</dbReference>
<dbReference type="HAMAP" id="MF_00508">
    <property type="entry name" value="Ribosomal_uS10"/>
    <property type="match status" value="1"/>
</dbReference>
<dbReference type="InterPro" id="IPR001848">
    <property type="entry name" value="Ribosomal_uS10"/>
</dbReference>
<dbReference type="InterPro" id="IPR018268">
    <property type="entry name" value="Ribosomal_uS10_CS"/>
</dbReference>
<dbReference type="InterPro" id="IPR027486">
    <property type="entry name" value="Ribosomal_uS10_dom"/>
</dbReference>
<dbReference type="InterPro" id="IPR036838">
    <property type="entry name" value="Ribosomal_uS10_dom_sf"/>
</dbReference>
<dbReference type="NCBIfam" id="NF001861">
    <property type="entry name" value="PRK00596.1"/>
    <property type="match status" value="1"/>
</dbReference>
<dbReference type="NCBIfam" id="TIGR01049">
    <property type="entry name" value="rpsJ_bact"/>
    <property type="match status" value="1"/>
</dbReference>
<dbReference type="PANTHER" id="PTHR11700">
    <property type="entry name" value="30S RIBOSOMAL PROTEIN S10 FAMILY MEMBER"/>
    <property type="match status" value="1"/>
</dbReference>
<dbReference type="Pfam" id="PF00338">
    <property type="entry name" value="Ribosomal_S10"/>
    <property type="match status" value="1"/>
</dbReference>
<dbReference type="PRINTS" id="PR00971">
    <property type="entry name" value="RIBOSOMALS10"/>
</dbReference>
<dbReference type="SMART" id="SM01403">
    <property type="entry name" value="Ribosomal_S10"/>
    <property type="match status" value="1"/>
</dbReference>
<dbReference type="SUPFAM" id="SSF54999">
    <property type="entry name" value="Ribosomal protein S10"/>
    <property type="match status" value="1"/>
</dbReference>
<dbReference type="PROSITE" id="PS00361">
    <property type="entry name" value="RIBOSOMAL_S10"/>
    <property type="match status" value="1"/>
</dbReference>